<feature type="chain" id="PRO_0000300616" description="Protein DsrB">
    <location>
        <begin position="1"/>
        <end position="62"/>
    </location>
</feature>
<reference key="1">
    <citation type="journal article" date="2006" name="BMC Genomics">
        <title>Complete genome sequence of Shigella flexneri 5b and comparison with Shigella flexneri 2a.</title>
        <authorList>
            <person name="Nie H."/>
            <person name="Yang F."/>
            <person name="Zhang X."/>
            <person name="Yang J."/>
            <person name="Chen L."/>
            <person name="Wang J."/>
            <person name="Xiong Z."/>
            <person name="Peng J."/>
            <person name="Sun L."/>
            <person name="Dong J."/>
            <person name="Xue Y."/>
            <person name="Xu X."/>
            <person name="Chen S."/>
            <person name="Yao Z."/>
            <person name="Shen Y."/>
            <person name="Jin Q."/>
        </authorList>
    </citation>
    <scope>NUCLEOTIDE SEQUENCE [LARGE SCALE GENOMIC DNA]</scope>
    <source>
        <strain>8401</strain>
    </source>
</reference>
<sequence length="62" mass="6930">MKVNDRVTVKTDGGPRRPGVVLAVEEFSEGTMYLVALEDYPLGIWFFNEAGHQDGIFVEKAE</sequence>
<organism>
    <name type="scientific">Shigella flexneri serotype 5b (strain 8401)</name>
    <dbReference type="NCBI Taxonomy" id="373384"/>
    <lineage>
        <taxon>Bacteria</taxon>
        <taxon>Pseudomonadati</taxon>
        <taxon>Pseudomonadota</taxon>
        <taxon>Gammaproteobacteria</taxon>
        <taxon>Enterobacterales</taxon>
        <taxon>Enterobacteriaceae</taxon>
        <taxon>Shigella</taxon>
    </lineage>
</organism>
<gene>
    <name evidence="1" type="primary">dsrB</name>
    <name type="ordered locus">SFV_1995</name>
</gene>
<accession>Q0T3H9</accession>
<dbReference type="EMBL" id="CP000266">
    <property type="protein sequence ID" value="ABF04136.1"/>
    <property type="status" value="ALT_INIT"/>
    <property type="molecule type" value="Genomic_DNA"/>
</dbReference>
<dbReference type="RefSeq" id="WP_000867216.1">
    <property type="nucleotide sequence ID" value="NC_008258.1"/>
</dbReference>
<dbReference type="SMR" id="Q0T3H9"/>
<dbReference type="KEGG" id="sfv:SFV_1995"/>
<dbReference type="HOGENOM" id="CLU_189289_0_0_6"/>
<dbReference type="Proteomes" id="UP000000659">
    <property type="component" value="Chromosome"/>
</dbReference>
<dbReference type="HAMAP" id="MF_01549">
    <property type="entry name" value="DsrB"/>
    <property type="match status" value="1"/>
</dbReference>
<dbReference type="InterPro" id="IPR019717">
    <property type="entry name" value="Dextransucrase_DSRB"/>
</dbReference>
<dbReference type="NCBIfam" id="NF007981">
    <property type="entry name" value="PRK10708.1"/>
    <property type="match status" value="1"/>
</dbReference>
<dbReference type="Pfam" id="PF10781">
    <property type="entry name" value="DSRB"/>
    <property type="match status" value="1"/>
</dbReference>
<protein>
    <recommendedName>
        <fullName evidence="1">Protein DsrB</fullName>
    </recommendedName>
</protein>
<proteinExistence type="inferred from homology"/>
<evidence type="ECO:0000255" key="1">
    <source>
        <dbReference type="HAMAP-Rule" id="MF_01549"/>
    </source>
</evidence>
<evidence type="ECO:0000305" key="2"/>
<name>DSRB_SHIF8</name>
<comment type="similarity">
    <text evidence="1">Belongs to the DsrB family.</text>
</comment>
<comment type="sequence caution" evidence="2">
    <conflict type="erroneous initiation">
        <sequence resource="EMBL-CDS" id="ABF04136"/>
    </conflict>
</comment>